<name>NADE_STRPN</name>
<dbReference type="EC" id="6.3.1.5" evidence="1"/>
<dbReference type="EMBL" id="AE005672">
    <property type="protein sequence ID" value="AAK75517.1"/>
    <property type="molecule type" value="Genomic_DNA"/>
</dbReference>
<dbReference type="PIR" id="D95165">
    <property type="entry name" value="D95165"/>
</dbReference>
<dbReference type="RefSeq" id="WP_000058033.1">
    <property type="nucleotide sequence ID" value="NZ_CP155539.1"/>
</dbReference>
<dbReference type="SMR" id="P65508"/>
<dbReference type="PaxDb" id="170187-SP_1420"/>
<dbReference type="EnsemblBacteria" id="AAK75517">
    <property type="protein sequence ID" value="AAK75517"/>
    <property type="gene ID" value="SP_1420"/>
</dbReference>
<dbReference type="GeneID" id="45653323"/>
<dbReference type="KEGG" id="spn:SP_1420"/>
<dbReference type="eggNOG" id="COG0171">
    <property type="taxonomic scope" value="Bacteria"/>
</dbReference>
<dbReference type="PhylomeDB" id="P65508"/>
<dbReference type="BioCyc" id="SPNE170187:G1FZB-1430-MONOMER"/>
<dbReference type="UniPathway" id="UPA00253">
    <property type="reaction ID" value="UER00333"/>
</dbReference>
<dbReference type="Proteomes" id="UP000000585">
    <property type="component" value="Chromosome"/>
</dbReference>
<dbReference type="GO" id="GO:0005737">
    <property type="term" value="C:cytoplasm"/>
    <property type="evidence" value="ECO:0007669"/>
    <property type="project" value="InterPro"/>
</dbReference>
<dbReference type="GO" id="GO:0005524">
    <property type="term" value="F:ATP binding"/>
    <property type="evidence" value="ECO:0007669"/>
    <property type="project" value="UniProtKB-UniRule"/>
</dbReference>
<dbReference type="GO" id="GO:0004359">
    <property type="term" value="F:glutaminase activity"/>
    <property type="evidence" value="ECO:0007669"/>
    <property type="project" value="InterPro"/>
</dbReference>
<dbReference type="GO" id="GO:0046872">
    <property type="term" value="F:metal ion binding"/>
    <property type="evidence" value="ECO:0007669"/>
    <property type="project" value="UniProtKB-KW"/>
</dbReference>
<dbReference type="GO" id="GO:0003952">
    <property type="term" value="F:NAD+ synthase (glutamine-hydrolyzing) activity"/>
    <property type="evidence" value="ECO:0007669"/>
    <property type="project" value="InterPro"/>
</dbReference>
<dbReference type="GO" id="GO:0008795">
    <property type="term" value="F:NAD+ synthase activity"/>
    <property type="evidence" value="ECO:0007669"/>
    <property type="project" value="UniProtKB-UniRule"/>
</dbReference>
<dbReference type="GO" id="GO:0009435">
    <property type="term" value="P:NAD biosynthetic process"/>
    <property type="evidence" value="ECO:0007669"/>
    <property type="project" value="UniProtKB-UniRule"/>
</dbReference>
<dbReference type="CDD" id="cd00553">
    <property type="entry name" value="NAD_synthase"/>
    <property type="match status" value="1"/>
</dbReference>
<dbReference type="FunFam" id="3.40.50.620:FF:000015">
    <property type="entry name" value="NH(3)-dependent NAD(+) synthetase"/>
    <property type="match status" value="1"/>
</dbReference>
<dbReference type="Gene3D" id="3.40.50.620">
    <property type="entry name" value="HUPs"/>
    <property type="match status" value="1"/>
</dbReference>
<dbReference type="HAMAP" id="MF_00193">
    <property type="entry name" value="NadE_ammonia_dep"/>
    <property type="match status" value="1"/>
</dbReference>
<dbReference type="InterPro" id="IPR022310">
    <property type="entry name" value="NAD/GMP_synthase"/>
</dbReference>
<dbReference type="InterPro" id="IPR003694">
    <property type="entry name" value="NAD_synthase"/>
</dbReference>
<dbReference type="InterPro" id="IPR022926">
    <property type="entry name" value="NH(3)-dep_NAD(+)_synth"/>
</dbReference>
<dbReference type="InterPro" id="IPR014729">
    <property type="entry name" value="Rossmann-like_a/b/a_fold"/>
</dbReference>
<dbReference type="NCBIfam" id="TIGR00552">
    <property type="entry name" value="nadE"/>
    <property type="match status" value="1"/>
</dbReference>
<dbReference type="NCBIfam" id="NF001979">
    <property type="entry name" value="PRK00768.1"/>
    <property type="match status" value="1"/>
</dbReference>
<dbReference type="PANTHER" id="PTHR23090">
    <property type="entry name" value="NH 3 /GLUTAMINE-DEPENDENT NAD + SYNTHETASE"/>
    <property type="match status" value="1"/>
</dbReference>
<dbReference type="PANTHER" id="PTHR23090:SF7">
    <property type="entry name" value="NH(3)-DEPENDENT NAD(+) SYNTHETASE"/>
    <property type="match status" value="1"/>
</dbReference>
<dbReference type="Pfam" id="PF02540">
    <property type="entry name" value="NAD_synthase"/>
    <property type="match status" value="1"/>
</dbReference>
<dbReference type="SUPFAM" id="SSF52402">
    <property type="entry name" value="Adenine nucleotide alpha hydrolases-like"/>
    <property type="match status" value="1"/>
</dbReference>
<accession>P65508</accession>
<accession>Q97Q13</accession>
<keyword id="KW-0067">ATP-binding</keyword>
<keyword id="KW-0436">Ligase</keyword>
<keyword id="KW-0460">Magnesium</keyword>
<keyword id="KW-0479">Metal-binding</keyword>
<keyword id="KW-0520">NAD</keyword>
<keyword id="KW-0547">Nucleotide-binding</keyword>
<keyword id="KW-1185">Reference proteome</keyword>
<evidence type="ECO:0000255" key="1">
    <source>
        <dbReference type="HAMAP-Rule" id="MF_00193"/>
    </source>
</evidence>
<feature type="chain" id="PRO_0000152206" description="NH(3)-dependent NAD(+) synthetase">
    <location>
        <begin position="1"/>
        <end position="274"/>
    </location>
</feature>
<feature type="binding site" evidence="1">
    <location>
        <begin position="46"/>
        <end position="53"/>
    </location>
    <ligand>
        <name>ATP</name>
        <dbReference type="ChEBI" id="CHEBI:30616"/>
    </ligand>
</feature>
<feature type="binding site" evidence="1">
    <location>
        <position position="52"/>
    </location>
    <ligand>
        <name>Mg(2+)</name>
        <dbReference type="ChEBI" id="CHEBI:18420"/>
    </ligand>
</feature>
<feature type="binding site" evidence="1">
    <location>
        <position position="140"/>
    </location>
    <ligand>
        <name>deamido-NAD(+)</name>
        <dbReference type="ChEBI" id="CHEBI:58437"/>
    </ligand>
</feature>
<feature type="binding site" evidence="1">
    <location>
        <position position="160"/>
    </location>
    <ligand>
        <name>ATP</name>
        <dbReference type="ChEBI" id="CHEBI:30616"/>
    </ligand>
</feature>
<feature type="binding site" evidence="1">
    <location>
        <position position="165"/>
    </location>
    <ligand>
        <name>Mg(2+)</name>
        <dbReference type="ChEBI" id="CHEBI:18420"/>
    </ligand>
</feature>
<feature type="binding site" evidence="1">
    <location>
        <position position="173"/>
    </location>
    <ligand>
        <name>deamido-NAD(+)</name>
        <dbReference type="ChEBI" id="CHEBI:58437"/>
    </ligand>
</feature>
<feature type="binding site" evidence="1">
    <location>
        <position position="180"/>
    </location>
    <ligand>
        <name>deamido-NAD(+)</name>
        <dbReference type="ChEBI" id="CHEBI:58437"/>
    </ligand>
</feature>
<feature type="binding site" evidence="1">
    <location>
        <position position="189"/>
    </location>
    <ligand>
        <name>ATP</name>
        <dbReference type="ChEBI" id="CHEBI:30616"/>
    </ligand>
</feature>
<feature type="binding site" evidence="1">
    <location>
        <position position="211"/>
    </location>
    <ligand>
        <name>ATP</name>
        <dbReference type="ChEBI" id="CHEBI:30616"/>
    </ligand>
</feature>
<feature type="binding site" evidence="1">
    <location>
        <begin position="260"/>
        <end position="261"/>
    </location>
    <ligand>
        <name>deamido-NAD(+)</name>
        <dbReference type="ChEBI" id="CHEBI:58437"/>
    </ligand>
</feature>
<reference key="1">
    <citation type="journal article" date="2001" name="Science">
        <title>Complete genome sequence of a virulent isolate of Streptococcus pneumoniae.</title>
        <authorList>
            <person name="Tettelin H."/>
            <person name="Nelson K.E."/>
            <person name="Paulsen I.T."/>
            <person name="Eisen J.A."/>
            <person name="Read T.D."/>
            <person name="Peterson S.N."/>
            <person name="Heidelberg J.F."/>
            <person name="DeBoy R.T."/>
            <person name="Haft D.H."/>
            <person name="Dodson R.J."/>
            <person name="Durkin A.S."/>
            <person name="Gwinn M.L."/>
            <person name="Kolonay J.F."/>
            <person name="Nelson W.C."/>
            <person name="Peterson J.D."/>
            <person name="Umayam L.A."/>
            <person name="White O."/>
            <person name="Salzberg S.L."/>
            <person name="Lewis M.R."/>
            <person name="Radune D."/>
            <person name="Holtzapple E.K."/>
            <person name="Khouri H.M."/>
            <person name="Wolf A.M."/>
            <person name="Utterback T.R."/>
            <person name="Hansen C.L."/>
            <person name="McDonald L.A."/>
            <person name="Feldblyum T.V."/>
            <person name="Angiuoli S.V."/>
            <person name="Dickinson T."/>
            <person name="Hickey E.K."/>
            <person name="Holt I.E."/>
            <person name="Loftus B.J."/>
            <person name="Yang F."/>
            <person name="Smith H.O."/>
            <person name="Venter J.C."/>
            <person name="Dougherty B.A."/>
            <person name="Morrison D.A."/>
            <person name="Hollingshead S.K."/>
            <person name="Fraser C.M."/>
        </authorList>
    </citation>
    <scope>NUCLEOTIDE SEQUENCE [LARGE SCALE GENOMIC DNA]</scope>
    <source>
        <strain>ATCC BAA-334 / TIGR4</strain>
    </source>
</reference>
<protein>
    <recommendedName>
        <fullName evidence="1">NH(3)-dependent NAD(+) synthetase</fullName>
        <ecNumber evidence="1">6.3.1.5</ecNumber>
    </recommendedName>
</protein>
<proteinExistence type="inferred from homology"/>
<comment type="function">
    <text evidence="1">Catalyzes the ATP-dependent amidation of deamido-NAD to form NAD. Uses ammonia as a nitrogen source.</text>
</comment>
<comment type="catalytic activity">
    <reaction evidence="1">
        <text>deamido-NAD(+) + NH4(+) + ATP = AMP + diphosphate + NAD(+) + H(+)</text>
        <dbReference type="Rhea" id="RHEA:21188"/>
        <dbReference type="ChEBI" id="CHEBI:15378"/>
        <dbReference type="ChEBI" id="CHEBI:28938"/>
        <dbReference type="ChEBI" id="CHEBI:30616"/>
        <dbReference type="ChEBI" id="CHEBI:33019"/>
        <dbReference type="ChEBI" id="CHEBI:57540"/>
        <dbReference type="ChEBI" id="CHEBI:58437"/>
        <dbReference type="ChEBI" id="CHEBI:456215"/>
        <dbReference type="EC" id="6.3.1.5"/>
    </reaction>
</comment>
<comment type="pathway">
    <text evidence="1">Cofactor biosynthesis; NAD(+) biosynthesis; NAD(+) from deamido-NAD(+) (ammonia route): step 1/1.</text>
</comment>
<comment type="subunit">
    <text evidence="1">Homodimer.</text>
</comment>
<comment type="similarity">
    <text evidence="1">Belongs to the NAD synthetase family.</text>
</comment>
<sequence>MSLQETIIQELGVKPVIDAQEEIRRSIDFLKRYLKKHPFLKTFVLGISGGQDSTLAGRLAQLAMEELRAETGDDSYKFIAVRLPYGVQADEADAQKALAFIQPDVSLVVNIKESADAMTAAVEATGSPVSDFNKGNIKARCRMIAQYALAGSHSGAVIGTDHAAENITGFFTKFGDGGADILPLYRLNKRQGKQLLQKLGAEPALYEKIPTADLEEDKPGLADEVALGVTYAEIDDYLEGKTISPEAQATIENWWHKGQHKRHLPITVFDDFWE</sequence>
<organism>
    <name type="scientific">Streptococcus pneumoniae serotype 4 (strain ATCC BAA-334 / TIGR4)</name>
    <dbReference type="NCBI Taxonomy" id="170187"/>
    <lineage>
        <taxon>Bacteria</taxon>
        <taxon>Bacillati</taxon>
        <taxon>Bacillota</taxon>
        <taxon>Bacilli</taxon>
        <taxon>Lactobacillales</taxon>
        <taxon>Streptococcaceae</taxon>
        <taxon>Streptococcus</taxon>
    </lineage>
</organism>
<gene>
    <name evidence="1" type="primary">nadE</name>
    <name type="ordered locus">SP_1420</name>
</gene>